<dbReference type="EMBL" id="X59720">
    <property type="status" value="NOT_ANNOTATED_CDS"/>
    <property type="molecule type" value="Genomic_DNA"/>
</dbReference>
<dbReference type="EMBL" id="AF479936">
    <property type="protein sequence ID" value="AAL79249.1"/>
    <property type="molecule type" value="Genomic_DNA"/>
</dbReference>
<dbReference type="PaxDb" id="4932-YCR045W-A"/>
<dbReference type="EnsemblFungi" id="YCR045W-A_mRNA">
    <property type="protein sequence ID" value="YCR045W-A"/>
    <property type="gene ID" value="YCR045W-A"/>
</dbReference>
<dbReference type="AGR" id="SGD:S000028607"/>
<dbReference type="SGD" id="S000028607">
    <property type="gene designation" value="YCR045W-A"/>
</dbReference>
<dbReference type="HOGENOM" id="CLU_2098735_0_0_1"/>
<protein>
    <recommendedName>
        <fullName>Putative uncharacterized protein YCR045W-A</fullName>
    </recommendedName>
</protein>
<keyword id="KW-0732">Signal</keyword>
<reference key="1">
    <citation type="journal article" date="1992" name="Nature">
        <title>The complete DNA sequence of yeast chromosome III.</title>
        <authorList>
            <person name="Oliver S.G."/>
            <person name="van der Aart Q.J.M."/>
            <person name="Agostoni-Carbone M.L."/>
            <person name="Aigle M."/>
            <person name="Alberghina L."/>
            <person name="Alexandraki D."/>
            <person name="Antoine G."/>
            <person name="Anwar R."/>
            <person name="Ballesta J.P.G."/>
            <person name="Benit P."/>
            <person name="Berben G."/>
            <person name="Bergantino E."/>
            <person name="Biteau N."/>
            <person name="Bolle P.-A."/>
            <person name="Bolotin-Fukuhara M."/>
            <person name="Brown A."/>
            <person name="Brown A.J.P."/>
            <person name="Buhler J.-M."/>
            <person name="Carcano C."/>
            <person name="Carignani G."/>
            <person name="Cederberg H."/>
            <person name="Chanet R."/>
            <person name="Contreras R."/>
            <person name="Crouzet M."/>
            <person name="Daignan-Fornier B."/>
            <person name="Defoor E."/>
            <person name="Delgado M.D."/>
            <person name="Demolder J."/>
            <person name="Doira C."/>
            <person name="Dubois E."/>
            <person name="Dujon B."/>
            <person name="Duesterhoeft A."/>
            <person name="Erdmann D."/>
            <person name="Esteban M."/>
            <person name="Fabre F."/>
            <person name="Fairhead C."/>
            <person name="Faye G."/>
            <person name="Feldmann H."/>
            <person name="Fiers W."/>
            <person name="Francingues-Gaillard M.-C."/>
            <person name="Franco L."/>
            <person name="Frontali L."/>
            <person name="Fukuhara H."/>
            <person name="Fuller L.J."/>
            <person name="Galland P."/>
            <person name="Gent M.E."/>
            <person name="Gigot D."/>
            <person name="Gilliquet V."/>
            <person name="Glansdorff N."/>
            <person name="Goffeau A."/>
            <person name="Grenson M."/>
            <person name="Grisanti P."/>
            <person name="Grivell L.A."/>
            <person name="de Haan M."/>
            <person name="Haasemann M."/>
            <person name="Hatat D."/>
            <person name="Hoenicka J."/>
            <person name="Hegemann J.H."/>
            <person name="Herbert C.J."/>
            <person name="Hilger F."/>
            <person name="Hohmann S."/>
            <person name="Hollenberg C.P."/>
            <person name="Huse K."/>
            <person name="Iborra F."/>
            <person name="Indge K.J."/>
            <person name="Isono K."/>
            <person name="Jacq C."/>
            <person name="Jacquet M."/>
            <person name="James C.M."/>
            <person name="Jauniaux J.-C."/>
            <person name="Jia Y."/>
            <person name="Jimenez A."/>
            <person name="Kelly A."/>
            <person name="Kleinhans U."/>
            <person name="Kreisl P."/>
            <person name="Lanfranchi G."/>
            <person name="Lewis C."/>
            <person name="van der Linden C.G."/>
            <person name="Lucchini G."/>
            <person name="Lutzenkirchen K."/>
            <person name="Maat M.J."/>
            <person name="Mallet L."/>
            <person name="Mannhaupt G."/>
            <person name="Martegani E."/>
            <person name="Mathieu A."/>
            <person name="Maurer C.T.C."/>
            <person name="McConnell D."/>
            <person name="McKee R.A."/>
            <person name="Messenguy F."/>
            <person name="Mewes H.-W."/>
            <person name="Molemans F."/>
            <person name="Montague M.A."/>
            <person name="Muzi Falconi M."/>
            <person name="Navas L."/>
            <person name="Newlon C.S."/>
            <person name="Noone D."/>
            <person name="Pallier C."/>
            <person name="Panzeri L."/>
            <person name="Pearson B.M."/>
            <person name="Perea J."/>
            <person name="Philippsen P."/>
            <person name="Pierard A."/>
            <person name="Planta R.J."/>
            <person name="Plevani P."/>
            <person name="Poetsch B."/>
            <person name="Pohl F.M."/>
            <person name="Purnelle B."/>
            <person name="Ramezani Rad M."/>
            <person name="Rasmussen S.W."/>
            <person name="Raynal A."/>
            <person name="Remacha M.A."/>
            <person name="Richterich P."/>
            <person name="Roberts A.B."/>
            <person name="Rodriguez F."/>
            <person name="Sanz E."/>
            <person name="Schaaff-Gerstenschlaeger I."/>
            <person name="Scherens B."/>
            <person name="Schweitzer B."/>
            <person name="Shu Y."/>
            <person name="Skala J."/>
            <person name="Slonimski P.P."/>
            <person name="Sor F."/>
            <person name="Soustelle C."/>
            <person name="Spiegelberg R."/>
            <person name="Stateva L.I."/>
            <person name="Steensma H.Y."/>
            <person name="Steiner S."/>
            <person name="Thierry A."/>
            <person name="Thireos G."/>
            <person name="Tzermia M."/>
            <person name="Urrestarazu L.A."/>
            <person name="Valle G."/>
            <person name="Vetter I."/>
            <person name="van Vliet-Reedijk J.C."/>
            <person name="Voet M."/>
            <person name="Volckaert G."/>
            <person name="Vreken P."/>
            <person name="Wang H."/>
            <person name="Warmington J.R."/>
            <person name="von Wettstein D."/>
            <person name="Wicksteed B.L."/>
            <person name="Wilson C."/>
            <person name="Wurst H."/>
            <person name="Xu G."/>
            <person name="Yoshikawa A."/>
            <person name="Zimmermann F.K."/>
            <person name="Sgouros J.G."/>
        </authorList>
    </citation>
    <scope>NUCLEOTIDE SEQUENCE [LARGE SCALE GENOMIC DNA]</scope>
    <source>
        <strain>ATCC 204508 / S288c</strain>
    </source>
</reference>
<reference key="2">
    <citation type="journal article" date="2014" name="G3 (Bethesda)">
        <title>The reference genome sequence of Saccharomyces cerevisiae: Then and now.</title>
        <authorList>
            <person name="Engel S.R."/>
            <person name="Dietrich F.S."/>
            <person name="Fisk D.G."/>
            <person name="Binkley G."/>
            <person name="Balakrishnan R."/>
            <person name="Costanzo M.C."/>
            <person name="Dwight S.S."/>
            <person name="Hitz B.C."/>
            <person name="Karra K."/>
            <person name="Nash R.S."/>
            <person name="Weng S."/>
            <person name="Wong E.D."/>
            <person name="Lloyd P."/>
            <person name="Skrzypek M.S."/>
            <person name="Miyasato S.R."/>
            <person name="Simison M."/>
            <person name="Cherry J.M."/>
        </authorList>
    </citation>
    <scope>GENOME REANNOTATION</scope>
    <source>
        <strain>ATCC 204508 / S288c</strain>
    </source>
</reference>
<reference key="3">
    <citation type="journal article" date="2002" name="Nat. Biotechnol.">
        <title>An integrated approach for finding overlooked genes in yeast.</title>
        <authorList>
            <person name="Kumar A."/>
            <person name="Harrison P.M."/>
            <person name="Cheung K.-H."/>
            <person name="Lan N."/>
            <person name="Echols N."/>
            <person name="Bertone P."/>
            <person name="Miller P."/>
            <person name="Gerstein M.B."/>
            <person name="Snyder M."/>
        </authorList>
    </citation>
    <scope>NUCLEOTIDE SEQUENCE [GENOMIC DNA]</scope>
</reference>
<comment type="miscellaneous">
    <text evidence="2">Completely overlaps RRT12.</text>
</comment>
<comment type="caution">
    <text evidence="3">Product of a dubious gene prediction unlikely to encode a functional protein. Because of that it is not part of the S.cerevisiae S288c complete/reference proteome set.</text>
</comment>
<evidence type="ECO:0000255" key="1"/>
<evidence type="ECO:0000305" key="2"/>
<evidence type="ECO:0000305" key="3">
    <source>
    </source>
</evidence>
<name>YC045_YEAST</name>
<organism>
    <name type="scientific">Saccharomyces cerevisiae (strain ATCC 204508 / S288c)</name>
    <name type="common">Baker's yeast</name>
    <dbReference type="NCBI Taxonomy" id="559292"/>
    <lineage>
        <taxon>Eukaryota</taxon>
        <taxon>Fungi</taxon>
        <taxon>Dikarya</taxon>
        <taxon>Ascomycota</taxon>
        <taxon>Saccharomycotina</taxon>
        <taxon>Saccharomycetes</taxon>
        <taxon>Saccharomycetales</taxon>
        <taxon>Saccharomycetaceae</taxon>
        <taxon>Saccharomyces</taxon>
    </lineage>
</organism>
<accession>Q8TGQ2</accession>
<proteinExistence type="uncertain"/>
<sequence>MAPSTAMLIMGLLKLPRLRLATHFLPCGRLTFVQCSTMNSRPLRTLLASPDPSLPKTLTSTRLTLFAAPYVLEPTSPATCVPWPFWSPNPSLVKSIPWMTLSSNSGWSAKIPVSMI</sequence>
<gene>
    <name type="ordered locus">YCR045W-A</name>
</gene>
<feature type="signal peptide" evidence="1">
    <location>
        <begin position="1"/>
        <end position="21"/>
    </location>
</feature>
<feature type="chain" id="PRO_0000299837" description="Putative uncharacterized protein YCR045W-A">
    <location>
        <begin position="22"/>
        <end position="116"/>
    </location>
</feature>